<feature type="chain" id="PRO_1000004173" description="Large ribosomal subunit protein bL33">
    <location>
        <begin position="1"/>
        <end position="56"/>
    </location>
</feature>
<keyword id="KW-0687">Ribonucleoprotein</keyword>
<keyword id="KW-0689">Ribosomal protein</keyword>
<reference key="1">
    <citation type="journal article" date="2007" name="J. Bacteriol.">
        <title>Complete genome sequence of Haemophilus somnus (Histophilus somni) strain 129Pt and comparison to Haemophilus ducreyi 35000HP and Haemophilus influenzae Rd.</title>
        <authorList>
            <person name="Challacombe J.F."/>
            <person name="Duncan A.J."/>
            <person name="Brettin T.S."/>
            <person name="Bruce D."/>
            <person name="Chertkov O."/>
            <person name="Detter J.C."/>
            <person name="Han C.S."/>
            <person name="Misra M."/>
            <person name="Richardson P."/>
            <person name="Tapia R."/>
            <person name="Thayer N."/>
            <person name="Xie G."/>
            <person name="Inzana T.J."/>
        </authorList>
    </citation>
    <scope>NUCLEOTIDE SEQUENCE [LARGE SCALE GENOMIC DNA]</scope>
    <source>
        <strain>129Pt</strain>
    </source>
</reference>
<comment type="similarity">
    <text evidence="1">Belongs to the bacterial ribosomal protein bL33 family.</text>
</comment>
<name>RL33_HISS1</name>
<organism>
    <name type="scientific">Histophilus somni (strain 129Pt)</name>
    <name type="common">Haemophilus somnus</name>
    <dbReference type="NCBI Taxonomy" id="205914"/>
    <lineage>
        <taxon>Bacteria</taxon>
        <taxon>Pseudomonadati</taxon>
        <taxon>Pseudomonadota</taxon>
        <taxon>Gammaproteobacteria</taxon>
        <taxon>Pasteurellales</taxon>
        <taxon>Pasteurellaceae</taxon>
        <taxon>Histophilus</taxon>
    </lineage>
</organism>
<gene>
    <name evidence="1" type="primary">rpmG</name>
    <name type="ordered locus">HS_0145.1</name>
    <name type="ORF">HS_0145a</name>
</gene>
<protein>
    <recommendedName>
        <fullName evidence="1">Large ribosomal subunit protein bL33</fullName>
    </recommendedName>
    <alternativeName>
        <fullName evidence="2">50S ribosomal protein L33</fullName>
    </alternativeName>
</protein>
<proteinExistence type="inferred from homology"/>
<evidence type="ECO:0000255" key="1">
    <source>
        <dbReference type="HAMAP-Rule" id="MF_00294"/>
    </source>
</evidence>
<evidence type="ECO:0000305" key="2"/>
<accession>Q0I0X7</accession>
<dbReference type="EMBL" id="CP000436">
    <property type="protein sequence ID" value="ABI26064.1"/>
    <property type="molecule type" value="Genomic_DNA"/>
</dbReference>
<dbReference type="SMR" id="Q0I0X7"/>
<dbReference type="KEGG" id="hso:HS_0145a"/>
<dbReference type="eggNOG" id="COG0267">
    <property type="taxonomic scope" value="Bacteria"/>
</dbReference>
<dbReference type="HOGENOM" id="CLU_190949_1_1_6"/>
<dbReference type="GO" id="GO:0022625">
    <property type="term" value="C:cytosolic large ribosomal subunit"/>
    <property type="evidence" value="ECO:0007669"/>
    <property type="project" value="TreeGrafter"/>
</dbReference>
<dbReference type="GO" id="GO:0003735">
    <property type="term" value="F:structural constituent of ribosome"/>
    <property type="evidence" value="ECO:0007669"/>
    <property type="project" value="InterPro"/>
</dbReference>
<dbReference type="GO" id="GO:0006412">
    <property type="term" value="P:translation"/>
    <property type="evidence" value="ECO:0007669"/>
    <property type="project" value="UniProtKB-UniRule"/>
</dbReference>
<dbReference type="FunFam" id="2.20.28.120:FF:000001">
    <property type="entry name" value="50S ribosomal protein L33"/>
    <property type="match status" value="1"/>
</dbReference>
<dbReference type="Gene3D" id="2.20.28.120">
    <property type="entry name" value="Ribosomal protein L33"/>
    <property type="match status" value="1"/>
</dbReference>
<dbReference type="HAMAP" id="MF_00294">
    <property type="entry name" value="Ribosomal_bL33"/>
    <property type="match status" value="1"/>
</dbReference>
<dbReference type="InterPro" id="IPR001705">
    <property type="entry name" value="Ribosomal_bL33"/>
</dbReference>
<dbReference type="InterPro" id="IPR018264">
    <property type="entry name" value="Ribosomal_bL33_CS"/>
</dbReference>
<dbReference type="InterPro" id="IPR038584">
    <property type="entry name" value="Ribosomal_bL33_sf"/>
</dbReference>
<dbReference type="InterPro" id="IPR011332">
    <property type="entry name" value="Ribosomal_zn-bd"/>
</dbReference>
<dbReference type="NCBIfam" id="NF001860">
    <property type="entry name" value="PRK00595.1"/>
    <property type="match status" value="1"/>
</dbReference>
<dbReference type="NCBIfam" id="TIGR01023">
    <property type="entry name" value="rpmG_bact"/>
    <property type="match status" value="1"/>
</dbReference>
<dbReference type="PANTHER" id="PTHR15238">
    <property type="entry name" value="54S RIBOSOMAL PROTEIN L39, MITOCHONDRIAL"/>
    <property type="match status" value="1"/>
</dbReference>
<dbReference type="PANTHER" id="PTHR15238:SF1">
    <property type="entry name" value="LARGE RIBOSOMAL SUBUNIT PROTEIN BL33M"/>
    <property type="match status" value="1"/>
</dbReference>
<dbReference type="Pfam" id="PF00471">
    <property type="entry name" value="Ribosomal_L33"/>
    <property type="match status" value="1"/>
</dbReference>
<dbReference type="SUPFAM" id="SSF57829">
    <property type="entry name" value="Zn-binding ribosomal proteins"/>
    <property type="match status" value="1"/>
</dbReference>
<dbReference type="PROSITE" id="PS00582">
    <property type="entry name" value="RIBOSOMAL_L33"/>
    <property type="match status" value="1"/>
</dbReference>
<sequence>MAAKGAREKIRLVSTAETGHFYTTTKNKRNMPEKMEIKKFDPVVRKHVIYKEAKIK</sequence>